<reference key="1">
    <citation type="submission" date="2006-08" db="EMBL/GenBank/DDBJ databases">
        <title>Positive selection in transcription factor genes on the human lineage.</title>
        <authorList>
            <person name="Nickel G.C."/>
            <person name="Tefft D.L."/>
            <person name="Trevarthen K."/>
            <person name="Funt J."/>
            <person name="Adams M.D."/>
        </authorList>
    </citation>
    <scope>NUCLEOTIDE SEQUENCE [GENOMIC DNA]</scope>
</reference>
<accession>A1YER2</accession>
<protein>
    <recommendedName>
        <fullName evidence="3">Protein HTATIP2</fullName>
    </recommendedName>
</protein>
<name>HTAI2_GORGO</name>
<keyword id="KW-0007">Acetylation</keyword>
<keyword id="KW-0963">Cytoplasm</keyword>
<keyword id="KW-1015">Disulfide bond</keyword>
<keyword id="KW-0521">NADP</keyword>
<keyword id="KW-1185">Reference proteome</keyword>
<keyword id="KW-0810">Translation regulation</keyword>
<keyword id="KW-0043">Tumor suppressor</keyword>
<organism>
    <name type="scientific">Gorilla gorilla gorilla</name>
    <name type="common">Western lowland gorilla</name>
    <dbReference type="NCBI Taxonomy" id="9595"/>
    <lineage>
        <taxon>Eukaryota</taxon>
        <taxon>Metazoa</taxon>
        <taxon>Chordata</taxon>
        <taxon>Craniata</taxon>
        <taxon>Vertebrata</taxon>
        <taxon>Euteleostomi</taxon>
        <taxon>Mammalia</taxon>
        <taxon>Eutheria</taxon>
        <taxon>Euarchontoglires</taxon>
        <taxon>Primates</taxon>
        <taxon>Haplorrhini</taxon>
        <taxon>Catarrhini</taxon>
        <taxon>Hominidae</taxon>
        <taxon>Gorilla</taxon>
    </lineage>
</organism>
<proteinExistence type="inferred from homology"/>
<comment type="function">
    <text evidence="1 2">Represses translation by preventing reactivation of elongation factor eEF1A (By similarity). May also inhibit nuclear import by competing with nuclear import substrates for binding to a subset of nuclear transport receptors. Has additionally been proposed to act as a redox sensor involved in cellular oxidative stress surveillance (By similarity).</text>
</comment>
<comment type="subunit">
    <text evidence="1 2">Monomer. Forms homodimers during oxidative stress (By similarity). Interacts (via N-terminus) with elongation factor EEF1A1 (via middle-region); the interaction is direct and competes with EEF1A1 binding to guanyl-nucleotide exchange factor EEF1B2, thereby inhibiting GDP for GTP exchange and reactivation of EEF1A1 (By similarity). Interacts with nuclear transport receptors XPO4, IPO5/RANBP5, IPO7, IPO9 and KPNB1 as well as GCN1L1/GCN1 and LRPPRC probably through their HEAT repeats. Binds NCOA5/CIA (By similarity).</text>
</comment>
<comment type="subcellular location">
    <subcellularLocation>
        <location evidence="2">Cytoplasm</location>
    </subcellularLocation>
</comment>
<gene>
    <name type="primary">HTATIP2</name>
</gene>
<feature type="initiator methionine" description="Removed" evidence="2">
    <location>
        <position position="1"/>
    </location>
</feature>
<feature type="chain" id="PRO_0000285510" description="Protein HTATIP2">
    <location>
        <begin position="2"/>
        <end position="242"/>
    </location>
</feature>
<feature type="region of interest" description="Required for interaction with elongation factor EEF1A1" evidence="1">
    <location>
        <begin position="2"/>
        <end position="25"/>
    </location>
</feature>
<feature type="active site" description="Proton acceptor" evidence="2">
    <location>
        <position position="143"/>
    </location>
</feature>
<feature type="active site" evidence="2">
    <location>
        <position position="147"/>
    </location>
</feature>
<feature type="binding site" evidence="2">
    <location>
        <position position="27"/>
    </location>
    <ligand>
        <name>NADPH</name>
        <dbReference type="ChEBI" id="CHEBI:57783"/>
    </ligand>
</feature>
<feature type="binding site" evidence="2">
    <location>
        <position position="28"/>
    </location>
    <ligand>
        <name>NADPH</name>
        <dbReference type="ChEBI" id="CHEBI:57783"/>
    </ligand>
</feature>
<feature type="binding site" evidence="2">
    <location>
        <position position="29"/>
    </location>
    <ligand>
        <name>NADPH</name>
        <dbReference type="ChEBI" id="CHEBI:57783"/>
    </ligand>
</feature>
<feature type="binding site" evidence="2">
    <location>
        <position position="30"/>
    </location>
    <ligand>
        <name>NADPH</name>
        <dbReference type="ChEBI" id="CHEBI:57783"/>
    </ligand>
</feature>
<feature type="binding site" evidence="2">
    <location>
        <position position="52"/>
    </location>
    <ligand>
        <name>NADPH</name>
        <dbReference type="ChEBI" id="CHEBI:57783"/>
    </ligand>
</feature>
<feature type="binding site" evidence="2">
    <location>
        <position position="53"/>
    </location>
    <ligand>
        <name>NADPH</name>
        <dbReference type="ChEBI" id="CHEBI:57783"/>
    </ligand>
</feature>
<feature type="binding site" evidence="2">
    <location>
        <position position="92"/>
    </location>
    <ligand>
        <name>NADPH</name>
        <dbReference type="ChEBI" id="CHEBI:57783"/>
    </ligand>
</feature>
<feature type="binding site" evidence="2">
    <location>
        <position position="93"/>
    </location>
    <ligand>
        <name>NADPH</name>
        <dbReference type="ChEBI" id="CHEBI:57783"/>
    </ligand>
</feature>
<feature type="binding site" evidence="2">
    <location>
        <position position="143"/>
    </location>
    <ligand>
        <name>NADPH</name>
        <dbReference type="ChEBI" id="CHEBI:57783"/>
    </ligand>
</feature>
<feature type="binding site" evidence="2">
    <location>
        <position position="147"/>
    </location>
    <ligand>
        <name>NADPH</name>
        <dbReference type="ChEBI" id="CHEBI:57783"/>
    </ligand>
</feature>
<feature type="binding site" evidence="2">
    <location>
        <position position="170"/>
    </location>
    <ligand>
        <name>NADPH</name>
        <dbReference type="ChEBI" id="CHEBI:57783"/>
    </ligand>
</feature>
<feature type="binding site" evidence="2">
    <location>
        <position position="178"/>
    </location>
    <ligand>
        <name>NADPH</name>
        <dbReference type="ChEBI" id="CHEBI:57783"/>
    </ligand>
</feature>
<feature type="modified residue" description="N-acetylalanine" evidence="2">
    <location>
        <position position="2"/>
    </location>
</feature>
<feature type="disulfide bond" description="Interchain; during oxidative stress" evidence="2">
    <location>
        <position position="172"/>
    </location>
</feature>
<sequence>MAETEALSKLREDFRMQNKSVFILGASGETGRVLLKEILEQGLFSKVTLIGRRKLTFDEEAYKNVNQEVVDFEKLDDYASAFQGHDVGFCCLGTTRGKAGAEGFVRVDRDYVLKSAELAKAGGCKHFNLLSSKGADKSSKFLYLQVKGEVEAKVEELKFDRYSVFRPGVLLCDRQESRPGEWLVRKFFGSLPESWASGHSVPVVTVVRAMLNNVVRPRDKQMELLENKAIHDLGKAHGSLKP</sequence>
<dbReference type="EMBL" id="DQ976444">
    <property type="protein sequence ID" value="ABM46630.1"/>
    <property type="molecule type" value="Genomic_DNA"/>
</dbReference>
<dbReference type="RefSeq" id="XP_018892999.1">
    <property type="nucleotide sequence ID" value="XM_019037454.1"/>
</dbReference>
<dbReference type="RefSeq" id="XP_018893000.1">
    <property type="nucleotide sequence ID" value="XM_019037455.1"/>
</dbReference>
<dbReference type="RefSeq" id="XP_030872087.1">
    <property type="nucleotide sequence ID" value="XM_031016227.3"/>
</dbReference>
<dbReference type="RefSeq" id="XP_030872088.1">
    <property type="nucleotide sequence ID" value="XM_031016228.3"/>
</dbReference>
<dbReference type="RefSeq" id="XP_055212576.1">
    <property type="nucleotide sequence ID" value="XM_055356601.2"/>
</dbReference>
<dbReference type="RefSeq" id="XP_063567113.1">
    <property type="nucleotide sequence ID" value="XM_063711043.1"/>
</dbReference>
<dbReference type="RefSeq" id="XP_063567114.1">
    <property type="nucleotide sequence ID" value="XM_063711044.1"/>
</dbReference>
<dbReference type="SMR" id="A1YER2"/>
<dbReference type="FunCoup" id="A1YER2">
    <property type="interactions" value="1205"/>
</dbReference>
<dbReference type="STRING" id="9593.ENSGGOP00000015311"/>
<dbReference type="Ensembl" id="ENSGGOT00000015748.3">
    <property type="protein sequence ID" value="ENSGGOP00000015311.3"/>
    <property type="gene ID" value="ENSGGOG00000015692.3"/>
</dbReference>
<dbReference type="GeneID" id="101152326"/>
<dbReference type="KEGG" id="ggo:101152326"/>
<dbReference type="CTD" id="10553"/>
<dbReference type="eggNOG" id="KOG4039">
    <property type="taxonomic scope" value="Eukaryota"/>
</dbReference>
<dbReference type="GeneTree" id="ENSGT00390000008184"/>
<dbReference type="HOGENOM" id="CLU_071330_2_2_1"/>
<dbReference type="InParanoid" id="A1YER2"/>
<dbReference type="OMA" id="DWPQLTI"/>
<dbReference type="Proteomes" id="UP000001519">
    <property type="component" value="Chromosome 11"/>
</dbReference>
<dbReference type="Bgee" id="ENSGGOG00000015692">
    <property type="expression patterns" value="Expressed in liver and 6 other cell types or tissues"/>
</dbReference>
<dbReference type="GO" id="GO:0005737">
    <property type="term" value="C:cytoplasm"/>
    <property type="evidence" value="ECO:0000318"/>
    <property type="project" value="GO_Central"/>
</dbReference>
<dbReference type="GO" id="GO:0005829">
    <property type="term" value="C:cytosol"/>
    <property type="evidence" value="ECO:0007669"/>
    <property type="project" value="Ensembl"/>
</dbReference>
<dbReference type="GO" id="GO:0005635">
    <property type="term" value="C:nuclear envelope"/>
    <property type="evidence" value="ECO:0007669"/>
    <property type="project" value="UniProtKB-SubCell"/>
</dbReference>
<dbReference type="GO" id="GO:0016491">
    <property type="term" value="F:oxidoreductase activity"/>
    <property type="evidence" value="ECO:0007669"/>
    <property type="project" value="UniProtKB-KW"/>
</dbReference>
<dbReference type="GO" id="GO:0004674">
    <property type="term" value="F:protein serine/threonine kinase activity"/>
    <property type="evidence" value="ECO:0007669"/>
    <property type="project" value="Ensembl"/>
</dbReference>
<dbReference type="GO" id="GO:0001525">
    <property type="term" value="P:angiogenesis"/>
    <property type="evidence" value="ECO:0007669"/>
    <property type="project" value="UniProtKB-KW"/>
</dbReference>
<dbReference type="GO" id="GO:0006915">
    <property type="term" value="P:apoptotic process"/>
    <property type="evidence" value="ECO:0007669"/>
    <property type="project" value="UniProtKB-KW"/>
</dbReference>
<dbReference type="GO" id="GO:0030154">
    <property type="term" value="P:cell differentiation"/>
    <property type="evidence" value="ECO:0007669"/>
    <property type="project" value="UniProtKB-KW"/>
</dbReference>
<dbReference type="GO" id="GO:0051170">
    <property type="term" value="P:import into nucleus"/>
    <property type="evidence" value="ECO:0000318"/>
    <property type="project" value="GO_Central"/>
</dbReference>
<dbReference type="GO" id="GO:0043068">
    <property type="term" value="P:positive regulation of programmed cell death"/>
    <property type="evidence" value="ECO:0007669"/>
    <property type="project" value="Ensembl"/>
</dbReference>
<dbReference type="GO" id="GO:0045944">
    <property type="term" value="P:positive regulation of transcription by RNA polymerase II"/>
    <property type="evidence" value="ECO:0007669"/>
    <property type="project" value="Ensembl"/>
</dbReference>
<dbReference type="CDD" id="cd05250">
    <property type="entry name" value="CC3_like_SDR_a"/>
    <property type="match status" value="1"/>
</dbReference>
<dbReference type="FunFam" id="3.40.50.720:FF:000271">
    <property type="entry name" value="oxidoreductase HTATIP2 isoform X1"/>
    <property type="match status" value="1"/>
</dbReference>
<dbReference type="Gene3D" id="3.40.50.720">
    <property type="entry name" value="NAD(P)-binding Rossmann-like Domain"/>
    <property type="match status" value="1"/>
</dbReference>
<dbReference type="InterPro" id="IPR016040">
    <property type="entry name" value="NAD(P)-bd_dom"/>
</dbReference>
<dbReference type="InterPro" id="IPR036291">
    <property type="entry name" value="NAD(P)-bd_dom_sf"/>
</dbReference>
<dbReference type="PANTHER" id="PTHR14097">
    <property type="entry name" value="OXIDOREDUCTASE HTATIP2"/>
    <property type="match status" value="1"/>
</dbReference>
<dbReference type="PANTHER" id="PTHR14097:SF7">
    <property type="entry name" value="OXIDOREDUCTASE HTATIP2"/>
    <property type="match status" value="1"/>
</dbReference>
<dbReference type="Pfam" id="PF13460">
    <property type="entry name" value="NAD_binding_10"/>
    <property type="match status" value="1"/>
</dbReference>
<dbReference type="SUPFAM" id="SSF51735">
    <property type="entry name" value="NAD(P)-binding Rossmann-fold domains"/>
    <property type="match status" value="1"/>
</dbReference>
<evidence type="ECO:0000250" key="1">
    <source>
        <dbReference type="UniProtKB" id="B0BNF8"/>
    </source>
</evidence>
<evidence type="ECO:0000250" key="2">
    <source>
        <dbReference type="UniProtKB" id="Q9BUP3"/>
    </source>
</evidence>
<evidence type="ECO:0000305" key="3"/>